<proteinExistence type="inferred from homology"/>
<comment type="function">
    <text evidence="1">Involved in the maturation of [NiFe] hydrogenases. Required for nickel insertion into the metal center of the hydrogenase.</text>
</comment>
<comment type="similarity">
    <text evidence="1 2">Belongs to the HypA/HybF family.</text>
</comment>
<evidence type="ECO:0000255" key="1">
    <source>
        <dbReference type="HAMAP-Rule" id="MF_00213"/>
    </source>
</evidence>
<evidence type="ECO:0000305" key="2"/>
<sequence length="112" mass="12219">MHELSLATALVETALWQAVQAEAQQIVSLKLRLGTWAGVDAEALRFAFSLVQQDTIAASAQLVIESVPAQFRCQTCGQQTPPPLLAACSHCGSDRWQLQQGRELQLQSMEVV</sequence>
<organism>
    <name type="scientific">Synechococcus sp. (strain ATCC 27144 / PCC 6301 / SAUG 1402/1)</name>
    <name type="common">Anacystis nidulans</name>
    <dbReference type="NCBI Taxonomy" id="269084"/>
    <lineage>
        <taxon>Bacteria</taxon>
        <taxon>Bacillati</taxon>
        <taxon>Cyanobacteriota</taxon>
        <taxon>Cyanophyceae</taxon>
        <taxon>Synechococcales</taxon>
        <taxon>Synechococcaceae</taxon>
        <taxon>Synechococcus</taxon>
    </lineage>
</organism>
<feature type="chain" id="PRO_0000129052" description="Hydrogenase maturation factor HypA">
    <location>
        <begin position="1"/>
        <end position="112"/>
    </location>
</feature>
<feature type="binding site" evidence="1">
    <location>
        <position position="2"/>
    </location>
    <ligand>
        <name>Ni(2+)</name>
        <dbReference type="ChEBI" id="CHEBI:49786"/>
    </ligand>
</feature>
<feature type="binding site" evidence="1">
    <location>
        <position position="73"/>
    </location>
    <ligand>
        <name>Zn(2+)</name>
        <dbReference type="ChEBI" id="CHEBI:29105"/>
    </ligand>
</feature>
<feature type="binding site" evidence="1">
    <location>
        <position position="76"/>
    </location>
    <ligand>
        <name>Zn(2+)</name>
        <dbReference type="ChEBI" id="CHEBI:29105"/>
    </ligand>
</feature>
<feature type="binding site" evidence="1">
    <location>
        <position position="88"/>
    </location>
    <ligand>
        <name>Zn(2+)</name>
        <dbReference type="ChEBI" id="CHEBI:29105"/>
    </ligand>
</feature>
<feature type="binding site" evidence="1">
    <location>
        <position position="91"/>
    </location>
    <ligand>
        <name>Zn(2+)</name>
        <dbReference type="ChEBI" id="CHEBI:29105"/>
    </ligand>
</feature>
<gene>
    <name evidence="1" type="primary">hypA</name>
    <name type="ordered locus">syc1557_d</name>
</gene>
<name>HYPA_SYNP6</name>
<protein>
    <recommendedName>
        <fullName evidence="1">Hydrogenase maturation factor HypA</fullName>
    </recommendedName>
</protein>
<accession>P94160</accession>
<dbReference type="EMBL" id="X97797">
    <property type="protein sequence ID" value="CAA66384.1"/>
    <property type="molecule type" value="Genomic_DNA"/>
</dbReference>
<dbReference type="EMBL" id="AP008231">
    <property type="protein sequence ID" value="BAD79747.1"/>
    <property type="molecule type" value="Genomic_DNA"/>
</dbReference>
<dbReference type="RefSeq" id="WP_011243867.1">
    <property type="nucleotide sequence ID" value="NZ_CP085785.1"/>
</dbReference>
<dbReference type="SMR" id="P94160"/>
<dbReference type="GeneID" id="72431447"/>
<dbReference type="KEGG" id="syc:syc1557_d"/>
<dbReference type="eggNOG" id="COG0375">
    <property type="taxonomic scope" value="Bacteria"/>
</dbReference>
<dbReference type="Proteomes" id="UP000001175">
    <property type="component" value="Chromosome"/>
</dbReference>
<dbReference type="GO" id="GO:0016151">
    <property type="term" value="F:nickel cation binding"/>
    <property type="evidence" value="ECO:0007669"/>
    <property type="project" value="UniProtKB-UniRule"/>
</dbReference>
<dbReference type="GO" id="GO:0008270">
    <property type="term" value="F:zinc ion binding"/>
    <property type="evidence" value="ECO:0007669"/>
    <property type="project" value="UniProtKB-UniRule"/>
</dbReference>
<dbReference type="GO" id="GO:0051604">
    <property type="term" value="P:protein maturation"/>
    <property type="evidence" value="ECO:0007669"/>
    <property type="project" value="InterPro"/>
</dbReference>
<dbReference type="GO" id="GO:0036211">
    <property type="term" value="P:protein modification process"/>
    <property type="evidence" value="ECO:0007669"/>
    <property type="project" value="UniProtKB-UniRule"/>
</dbReference>
<dbReference type="Gene3D" id="3.30.2320.80">
    <property type="match status" value="1"/>
</dbReference>
<dbReference type="HAMAP" id="MF_00213">
    <property type="entry name" value="HypA_HybF"/>
    <property type="match status" value="1"/>
</dbReference>
<dbReference type="InterPro" id="IPR020538">
    <property type="entry name" value="Hydgase_Ni_incorp_HypA/HybF_CS"/>
</dbReference>
<dbReference type="InterPro" id="IPR000688">
    <property type="entry name" value="HypA/HybF"/>
</dbReference>
<dbReference type="NCBIfam" id="TIGR00100">
    <property type="entry name" value="hypA"/>
    <property type="match status" value="1"/>
</dbReference>
<dbReference type="PANTHER" id="PTHR34535">
    <property type="entry name" value="HYDROGENASE MATURATION FACTOR HYPA"/>
    <property type="match status" value="1"/>
</dbReference>
<dbReference type="PANTHER" id="PTHR34535:SF3">
    <property type="entry name" value="HYDROGENASE MATURATION FACTOR HYPA"/>
    <property type="match status" value="1"/>
</dbReference>
<dbReference type="Pfam" id="PF01155">
    <property type="entry name" value="HypA"/>
    <property type="match status" value="1"/>
</dbReference>
<dbReference type="PIRSF" id="PIRSF004761">
    <property type="entry name" value="Hydrgn_mat_HypA"/>
    <property type="match status" value="1"/>
</dbReference>
<dbReference type="PROSITE" id="PS01249">
    <property type="entry name" value="HYPA"/>
    <property type="match status" value="1"/>
</dbReference>
<keyword id="KW-0479">Metal-binding</keyword>
<keyword id="KW-0533">Nickel</keyword>
<keyword id="KW-0862">Zinc</keyword>
<reference key="1">
    <citation type="journal article" date="1996" name="FEBS Lett.">
        <title>Cloning, molecular analysis and insertional mutagenesis of the bidirectional hydrogenase genes from the cyanobacterium Anacystis nidulans.</title>
        <authorList>
            <person name="Boison G."/>
            <person name="Schmitz O."/>
            <person name="Mikheeva L.E."/>
            <person name="Shestakov S.V."/>
            <person name="Bothe H."/>
        </authorList>
    </citation>
    <scope>NUCLEOTIDE SEQUENCE [GENOMIC DNA]</scope>
    <source>
        <strain>1402-1</strain>
    </source>
</reference>
<reference key="2">
    <citation type="journal article" date="2007" name="Photosyn. Res.">
        <title>Complete nucleotide sequence of the freshwater unicellular cyanobacterium Synechococcus elongatus PCC 6301 chromosome: gene content and organization.</title>
        <authorList>
            <person name="Sugita C."/>
            <person name="Ogata K."/>
            <person name="Shikata M."/>
            <person name="Jikuya H."/>
            <person name="Takano J."/>
            <person name="Furumichi M."/>
            <person name="Kanehisa M."/>
            <person name="Omata T."/>
            <person name="Sugiura M."/>
            <person name="Sugita M."/>
        </authorList>
    </citation>
    <scope>NUCLEOTIDE SEQUENCE [LARGE SCALE GENOMIC DNA]</scope>
    <source>
        <strain>ATCC 27144 / PCC 6301 / SAUG 1402/1</strain>
    </source>
</reference>